<accession>B1I9M7</accession>
<protein>
    <recommendedName>
        <fullName evidence="1">Aspartyl/glutamyl-tRNA(Asn/Gln) amidotransferase subunit B</fullName>
        <shortName evidence="1">Asp/Glu-ADT subunit B</shortName>
        <ecNumber evidence="1">6.3.5.-</ecNumber>
    </recommendedName>
</protein>
<reference key="1">
    <citation type="journal article" date="2010" name="Genome Biol.">
        <title>Structure and dynamics of the pan-genome of Streptococcus pneumoniae and closely related species.</title>
        <authorList>
            <person name="Donati C."/>
            <person name="Hiller N.L."/>
            <person name="Tettelin H."/>
            <person name="Muzzi A."/>
            <person name="Croucher N.J."/>
            <person name="Angiuoli S.V."/>
            <person name="Oggioni M."/>
            <person name="Dunning Hotopp J.C."/>
            <person name="Hu F.Z."/>
            <person name="Riley D.R."/>
            <person name="Covacci A."/>
            <person name="Mitchell T.J."/>
            <person name="Bentley S.D."/>
            <person name="Kilian M."/>
            <person name="Ehrlich G.D."/>
            <person name="Rappuoli R."/>
            <person name="Moxon E.R."/>
            <person name="Masignani V."/>
        </authorList>
    </citation>
    <scope>NUCLEOTIDE SEQUENCE [LARGE SCALE GENOMIC DNA]</scope>
    <source>
        <strain>Hungary19A-6</strain>
    </source>
</reference>
<keyword id="KW-0067">ATP-binding</keyword>
<keyword id="KW-0436">Ligase</keyword>
<keyword id="KW-0547">Nucleotide-binding</keyword>
<keyword id="KW-0648">Protein biosynthesis</keyword>
<gene>
    <name evidence="1" type="primary">gatB</name>
    <name type="ordered locus">SPH_0542</name>
</gene>
<sequence length="480" mass="53689">MNFETVIGLEVHVELNTNSKIFSPTSAHFGNDQNANTNVIDWSFPGVLPVLNKGVVDAGIKAALALNMDIHKKMHFDRKNYFYPDNPKAYQISQFDEPIGYNGWIEVELEDGTTKKIGIERAHLEEDAGKNTHGTDGYSYVDLNRQGVPLIEIVSEADMRSPEEAYAYLTALKEVIQYAGISDVKMEEGSMRVDANISLRPYGQEKFGTKTELKNLNSFSNVRKGLEYEVQRQAEILRSGGQIRQETRRYDEANKATILMRVKEGAADYRYFPEPDLPLFEISDEWIEEMRTELPEFPKERRARYVSDLGLSDYDASQLTANKVTSDFFEKAVALGGDAKQVSNWLQGEVAQFLNAEGKTLEQIELTPENLVEMITIIEDGTISSKIAKKVFVHLAKNGGGAREYVEKAGMVQISDPAILIPIIHQVFADNEAAVADFKSGKRNADKAFTGFLMKATKGQANPQVALKLLAQELAKLKEN</sequence>
<dbReference type="EC" id="6.3.5.-" evidence="1"/>
<dbReference type="EMBL" id="CP000936">
    <property type="protein sequence ID" value="ACA36675.1"/>
    <property type="molecule type" value="Genomic_DNA"/>
</dbReference>
<dbReference type="RefSeq" id="WP_001008661.1">
    <property type="nucleotide sequence ID" value="NC_010380.1"/>
</dbReference>
<dbReference type="SMR" id="B1I9M7"/>
<dbReference type="KEGG" id="spv:SPH_0542"/>
<dbReference type="HOGENOM" id="CLU_019240_0_0_9"/>
<dbReference type="Proteomes" id="UP000002163">
    <property type="component" value="Chromosome"/>
</dbReference>
<dbReference type="GO" id="GO:0050566">
    <property type="term" value="F:asparaginyl-tRNA synthase (glutamine-hydrolyzing) activity"/>
    <property type="evidence" value="ECO:0007669"/>
    <property type="project" value="RHEA"/>
</dbReference>
<dbReference type="GO" id="GO:0005524">
    <property type="term" value="F:ATP binding"/>
    <property type="evidence" value="ECO:0007669"/>
    <property type="project" value="UniProtKB-KW"/>
</dbReference>
<dbReference type="GO" id="GO:0050567">
    <property type="term" value="F:glutaminyl-tRNA synthase (glutamine-hydrolyzing) activity"/>
    <property type="evidence" value="ECO:0007669"/>
    <property type="project" value="UniProtKB-UniRule"/>
</dbReference>
<dbReference type="GO" id="GO:0070681">
    <property type="term" value="P:glutaminyl-tRNAGln biosynthesis via transamidation"/>
    <property type="evidence" value="ECO:0007669"/>
    <property type="project" value="TreeGrafter"/>
</dbReference>
<dbReference type="GO" id="GO:0006412">
    <property type="term" value="P:translation"/>
    <property type="evidence" value="ECO:0007669"/>
    <property type="project" value="UniProtKB-UniRule"/>
</dbReference>
<dbReference type="FunFam" id="1.10.10.410:FF:000001">
    <property type="entry name" value="Aspartyl/glutamyl-tRNA(Asn/Gln) amidotransferase subunit B"/>
    <property type="match status" value="1"/>
</dbReference>
<dbReference type="FunFam" id="1.10.150.380:FF:000001">
    <property type="entry name" value="Aspartyl/glutamyl-tRNA(Asn/Gln) amidotransferase subunit B"/>
    <property type="match status" value="1"/>
</dbReference>
<dbReference type="Gene3D" id="1.10.10.410">
    <property type="match status" value="1"/>
</dbReference>
<dbReference type="Gene3D" id="1.10.150.380">
    <property type="entry name" value="GatB domain, N-terminal subdomain"/>
    <property type="match status" value="1"/>
</dbReference>
<dbReference type="HAMAP" id="MF_00121">
    <property type="entry name" value="GatB"/>
    <property type="match status" value="1"/>
</dbReference>
<dbReference type="InterPro" id="IPR017959">
    <property type="entry name" value="Asn/Gln-tRNA_amidoTrfase_suB/E"/>
</dbReference>
<dbReference type="InterPro" id="IPR006075">
    <property type="entry name" value="Asn/Gln-tRNA_Trfase_suB/E_cat"/>
</dbReference>
<dbReference type="InterPro" id="IPR018027">
    <property type="entry name" value="Asn/Gln_amidotransferase"/>
</dbReference>
<dbReference type="InterPro" id="IPR003789">
    <property type="entry name" value="Asn/Gln_tRNA_amidoTrase-B-like"/>
</dbReference>
<dbReference type="InterPro" id="IPR004413">
    <property type="entry name" value="GatB"/>
</dbReference>
<dbReference type="InterPro" id="IPR042114">
    <property type="entry name" value="GatB_C_1"/>
</dbReference>
<dbReference type="InterPro" id="IPR023168">
    <property type="entry name" value="GatB_Yqey_C_2"/>
</dbReference>
<dbReference type="InterPro" id="IPR017958">
    <property type="entry name" value="Gln-tRNA_amidoTrfase_suB_CS"/>
</dbReference>
<dbReference type="InterPro" id="IPR014746">
    <property type="entry name" value="Gln_synth/guanido_kin_cat_dom"/>
</dbReference>
<dbReference type="NCBIfam" id="TIGR00133">
    <property type="entry name" value="gatB"/>
    <property type="match status" value="1"/>
</dbReference>
<dbReference type="NCBIfam" id="NF004011">
    <property type="entry name" value="PRK05477.1-1"/>
    <property type="match status" value="1"/>
</dbReference>
<dbReference type="NCBIfam" id="NF004012">
    <property type="entry name" value="PRK05477.1-2"/>
    <property type="match status" value="1"/>
</dbReference>
<dbReference type="NCBIfam" id="NF004014">
    <property type="entry name" value="PRK05477.1-4"/>
    <property type="match status" value="1"/>
</dbReference>
<dbReference type="PANTHER" id="PTHR11659">
    <property type="entry name" value="GLUTAMYL-TRNA GLN AMIDOTRANSFERASE SUBUNIT B MITOCHONDRIAL AND PROKARYOTIC PET112-RELATED"/>
    <property type="match status" value="1"/>
</dbReference>
<dbReference type="PANTHER" id="PTHR11659:SF0">
    <property type="entry name" value="GLUTAMYL-TRNA(GLN) AMIDOTRANSFERASE SUBUNIT B, MITOCHONDRIAL"/>
    <property type="match status" value="1"/>
</dbReference>
<dbReference type="Pfam" id="PF02934">
    <property type="entry name" value="GatB_N"/>
    <property type="match status" value="1"/>
</dbReference>
<dbReference type="Pfam" id="PF02637">
    <property type="entry name" value="GatB_Yqey"/>
    <property type="match status" value="1"/>
</dbReference>
<dbReference type="SMART" id="SM00845">
    <property type="entry name" value="GatB_Yqey"/>
    <property type="match status" value="1"/>
</dbReference>
<dbReference type="SUPFAM" id="SSF89095">
    <property type="entry name" value="GatB/YqeY motif"/>
    <property type="match status" value="1"/>
</dbReference>
<dbReference type="SUPFAM" id="SSF55931">
    <property type="entry name" value="Glutamine synthetase/guanido kinase"/>
    <property type="match status" value="1"/>
</dbReference>
<dbReference type="PROSITE" id="PS01234">
    <property type="entry name" value="GATB"/>
    <property type="match status" value="1"/>
</dbReference>
<name>GATB_STRPI</name>
<organism>
    <name type="scientific">Streptococcus pneumoniae (strain Hungary19A-6)</name>
    <dbReference type="NCBI Taxonomy" id="487214"/>
    <lineage>
        <taxon>Bacteria</taxon>
        <taxon>Bacillati</taxon>
        <taxon>Bacillota</taxon>
        <taxon>Bacilli</taxon>
        <taxon>Lactobacillales</taxon>
        <taxon>Streptococcaceae</taxon>
        <taxon>Streptococcus</taxon>
    </lineage>
</organism>
<feature type="chain" id="PRO_1000095245" description="Aspartyl/glutamyl-tRNA(Asn/Gln) amidotransferase subunit B">
    <location>
        <begin position="1"/>
        <end position="480"/>
    </location>
</feature>
<comment type="function">
    <text evidence="1">Allows the formation of correctly charged Asn-tRNA(Asn) or Gln-tRNA(Gln) through the transamidation of misacylated Asp-tRNA(Asn) or Glu-tRNA(Gln) in organisms which lack either or both of asparaginyl-tRNA or glutaminyl-tRNA synthetases. The reaction takes place in the presence of glutamine and ATP through an activated phospho-Asp-tRNA(Asn) or phospho-Glu-tRNA(Gln).</text>
</comment>
<comment type="catalytic activity">
    <reaction evidence="1">
        <text>L-glutamyl-tRNA(Gln) + L-glutamine + ATP + H2O = L-glutaminyl-tRNA(Gln) + L-glutamate + ADP + phosphate + H(+)</text>
        <dbReference type="Rhea" id="RHEA:17521"/>
        <dbReference type="Rhea" id="RHEA-COMP:9681"/>
        <dbReference type="Rhea" id="RHEA-COMP:9684"/>
        <dbReference type="ChEBI" id="CHEBI:15377"/>
        <dbReference type="ChEBI" id="CHEBI:15378"/>
        <dbReference type="ChEBI" id="CHEBI:29985"/>
        <dbReference type="ChEBI" id="CHEBI:30616"/>
        <dbReference type="ChEBI" id="CHEBI:43474"/>
        <dbReference type="ChEBI" id="CHEBI:58359"/>
        <dbReference type="ChEBI" id="CHEBI:78520"/>
        <dbReference type="ChEBI" id="CHEBI:78521"/>
        <dbReference type="ChEBI" id="CHEBI:456216"/>
    </reaction>
</comment>
<comment type="catalytic activity">
    <reaction evidence="1">
        <text>L-aspartyl-tRNA(Asn) + L-glutamine + ATP + H2O = L-asparaginyl-tRNA(Asn) + L-glutamate + ADP + phosphate + 2 H(+)</text>
        <dbReference type="Rhea" id="RHEA:14513"/>
        <dbReference type="Rhea" id="RHEA-COMP:9674"/>
        <dbReference type="Rhea" id="RHEA-COMP:9677"/>
        <dbReference type="ChEBI" id="CHEBI:15377"/>
        <dbReference type="ChEBI" id="CHEBI:15378"/>
        <dbReference type="ChEBI" id="CHEBI:29985"/>
        <dbReference type="ChEBI" id="CHEBI:30616"/>
        <dbReference type="ChEBI" id="CHEBI:43474"/>
        <dbReference type="ChEBI" id="CHEBI:58359"/>
        <dbReference type="ChEBI" id="CHEBI:78515"/>
        <dbReference type="ChEBI" id="CHEBI:78516"/>
        <dbReference type="ChEBI" id="CHEBI:456216"/>
    </reaction>
</comment>
<comment type="subunit">
    <text evidence="1">Heterotrimer of A, B and C subunits.</text>
</comment>
<comment type="similarity">
    <text evidence="1">Belongs to the GatB/GatE family. GatB subfamily.</text>
</comment>
<proteinExistence type="inferred from homology"/>
<evidence type="ECO:0000255" key="1">
    <source>
        <dbReference type="HAMAP-Rule" id="MF_00121"/>
    </source>
</evidence>